<dbReference type="EMBL" id="BC085924">
    <property type="protein sequence ID" value="AAH85924.1"/>
    <property type="molecule type" value="mRNA"/>
</dbReference>
<dbReference type="RefSeq" id="NP_001014081.1">
    <property type="nucleotide sequence ID" value="NM_001014059.1"/>
</dbReference>
<dbReference type="SMR" id="Q5U2P6"/>
<dbReference type="FunCoup" id="Q5U2P6">
    <property type="interactions" value="804"/>
</dbReference>
<dbReference type="STRING" id="10116.ENSRNOP00000069609"/>
<dbReference type="GlyCosmos" id="Q5U2P6">
    <property type="glycosylation" value="1 site, No reported glycans"/>
</dbReference>
<dbReference type="GlyGen" id="Q5U2P6">
    <property type="glycosylation" value="5 sites"/>
</dbReference>
<dbReference type="PhosphoSitePlus" id="Q5U2P6"/>
<dbReference type="PaxDb" id="10116-ENSRNOP00000060404"/>
<dbReference type="Ensembl" id="ENSRNOT00000065846.3">
    <property type="protein sequence ID" value="ENSRNOP00000060404.1"/>
    <property type="gene ID" value="ENSRNOG00000017052.8"/>
</dbReference>
<dbReference type="GeneID" id="312711"/>
<dbReference type="KEGG" id="rno:312711"/>
<dbReference type="UCSC" id="RGD:1304952">
    <property type="organism name" value="rat"/>
</dbReference>
<dbReference type="AGR" id="RGD:1304952"/>
<dbReference type="CTD" id="196500"/>
<dbReference type="RGD" id="1304952">
    <property type="gene designation" value="Pianp"/>
</dbReference>
<dbReference type="eggNOG" id="ENOG502RH1H">
    <property type="taxonomic scope" value="Eukaryota"/>
</dbReference>
<dbReference type="GeneTree" id="ENSGT00510000049460"/>
<dbReference type="HOGENOM" id="CLU_089346_0_0_1"/>
<dbReference type="InParanoid" id="Q5U2P6"/>
<dbReference type="OMA" id="MEPSACR"/>
<dbReference type="OrthoDB" id="9934112at2759"/>
<dbReference type="PhylomeDB" id="Q5U2P6"/>
<dbReference type="Reactome" id="R-RNO-198933">
    <property type="pathway name" value="Immunoregulatory interactions between a Lymphoid and a non-Lymphoid cell"/>
</dbReference>
<dbReference type="PRO" id="PR:Q5U2P6"/>
<dbReference type="Proteomes" id="UP000002494">
    <property type="component" value="Chromosome 4"/>
</dbReference>
<dbReference type="Bgee" id="ENSRNOG00000017052">
    <property type="expression patterns" value="Expressed in frontal cortex and 18 other cell types or tissues"/>
</dbReference>
<dbReference type="ExpressionAtlas" id="Q5U2P6">
    <property type="expression patterns" value="baseline and differential"/>
</dbReference>
<dbReference type="GO" id="GO:0016323">
    <property type="term" value="C:basolateral plasma membrane"/>
    <property type="evidence" value="ECO:0000314"/>
    <property type="project" value="UniProtKB"/>
</dbReference>
<dbReference type="GO" id="GO:0016020">
    <property type="term" value="C:membrane"/>
    <property type="evidence" value="ECO:0000318"/>
    <property type="project" value="GO_Central"/>
</dbReference>
<dbReference type="GO" id="GO:0098793">
    <property type="term" value="C:presynapse"/>
    <property type="evidence" value="ECO:0000266"/>
    <property type="project" value="RGD"/>
</dbReference>
<dbReference type="GO" id="GO:0019904">
    <property type="term" value="F:protein domain specific binding"/>
    <property type="evidence" value="ECO:0000266"/>
    <property type="project" value="RGD"/>
</dbReference>
<dbReference type="GO" id="GO:0021549">
    <property type="term" value="P:cerebellum development"/>
    <property type="evidence" value="ECO:0000266"/>
    <property type="project" value="RGD"/>
</dbReference>
<dbReference type="GO" id="GO:0021542">
    <property type="term" value="P:dentate gyrus development"/>
    <property type="evidence" value="ECO:0000266"/>
    <property type="project" value="RGD"/>
</dbReference>
<dbReference type="GO" id="GO:0007214">
    <property type="term" value="P:gamma-aminobutyric acid signaling pathway"/>
    <property type="evidence" value="ECO:0000266"/>
    <property type="project" value="RGD"/>
</dbReference>
<dbReference type="GO" id="GO:0010467">
    <property type="term" value="P:gene expression"/>
    <property type="evidence" value="ECO:0000266"/>
    <property type="project" value="RGD"/>
</dbReference>
<dbReference type="GO" id="GO:0014047">
    <property type="term" value="P:glutamate secretion"/>
    <property type="evidence" value="ECO:0000266"/>
    <property type="project" value="RGD"/>
</dbReference>
<dbReference type="GO" id="GO:0048872">
    <property type="term" value="P:homeostasis of number of cells"/>
    <property type="evidence" value="ECO:0000266"/>
    <property type="project" value="RGD"/>
</dbReference>
<dbReference type="GO" id="GO:0050776">
    <property type="term" value="P:regulation of immune response"/>
    <property type="evidence" value="ECO:0007669"/>
    <property type="project" value="InterPro"/>
</dbReference>
<dbReference type="GO" id="GO:0006950">
    <property type="term" value="P:response to stress"/>
    <property type="evidence" value="ECO:0000266"/>
    <property type="project" value="RGD"/>
</dbReference>
<dbReference type="GO" id="GO:0035176">
    <property type="term" value="P:social behavior"/>
    <property type="evidence" value="ECO:0000266"/>
    <property type="project" value="RGD"/>
</dbReference>
<dbReference type="GO" id="GO:0008542">
    <property type="term" value="P:visual learning"/>
    <property type="evidence" value="ECO:0000266"/>
    <property type="project" value="RGD"/>
</dbReference>
<dbReference type="InterPro" id="IPR029198">
    <property type="entry name" value="AJAP1_PANP_C"/>
</dbReference>
<dbReference type="InterPro" id="IPR039628">
    <property type="entry name" value="PIANP"/>
</dbReference>
<dbReference type="PANTHER" id="PTHR32023">
    <property type="entry name" value="PILR ALPHA-ASSOCIATED NEURAL PROTEIN"/>
    <property type="match status" value="1"/>
</dbReference>
<dbReference type="PANTHER" id="PTHR32023:SF2">
    <property type="entry name" value="PILR ALPHA-ASSOCIATED NEURAL PROTEIN"/>
    <property type="match status" value="1"/>
</dbReference>
<dbReference type="Pfam" id="PF15298">
    <property type="entry name" value="AJAP1_PANP_C"/>
    <property type="match status" value="1"/>
</dbReference>
<accession>Q5U2P6</accession>
<evidence type="ECO:0000250" key="1"/>
<evidence type="ECO:0000255" key="2"/>
<evidence type="ECO:0000256" key="3">
    <source>
        <dbReference type="SAM" id="MobiDB-lite"/>
    </source>
</evidence>
<evidence type="ECO:0000305" key="4"/>
<sequence>MWPAQLLSQLLPLWPLLLLPLSLPAQGSSHRSPPAPARPPCVRGGPSAPRHVCVWERAPPPSRSPRVPRSRRQVLPGTAPPATPSGFEEGPPSSQYPWAIVWGPTVSREDGGDPNSVNPGFLPLDYGFAAPHGLATPHPNSDSMRDDGDGLILGETPATLRPFLFGGRGEGVDPQLYVTITISIIIVLVATGIIFKFCWDRSQKRRRPSGQQGALRQEESQQPLTDLSPAGVTVLGAFGDSPTPTPDHEEPRGGPRPGMPQPKGAPAFQLNR</sequence>
<name>PIANP_RAT</name>
<organism>
    <name type="scientific">Rattus norvegicus</name>
    <name type="common">Rat</name>
    <dbReference type="NCBI Taxonomy" id="10116"/>
    <lineage>
        <taxon>Eukaryota</taxon>
        <taxon>Metazoa</taxon>
        <taxon>Chordata</taxon>
        <taxon>Craniata</taxon>
        <taxon>Vertebrata</taxon>
        <taxon>Euteleostomi</taxon>
        <taxon>Mammalia</taxon>
        <taxon>Eutheria</taxon>
        <taxon>Euarchontoglires</taxon>
        <taxon>Glires</taxon>
        <taxon>Rodentia</taxon>
        <taxon>Myomorpha</taxon>
        <taxon>Muroidea</taxon>
        <taxon>Muridae</taxon>
        <taxon>Murinae</taxon>
        <taxon>Rattus</taxon>
    </lineage>
</organism>
<protein>
    <recommendedName>
        <fullName>PILR alpha-associated neural protein</fullName>
    </recommendedName>
    <alternativeName>
        <fullName>PILR-associating neural protein</fullName>
    </alternativeName>
    <alternativeName>
        <fullName>Paired immunoglobin-like type 2 receptor-associating neural protein</fullName>
    </alternativeName>
</protein>
<keyword id="KW-0325">Glycoprotein</keyword>
<keyword id="KW-0472">Membrane</keyword>
<keyword id="KW-1185">Reference proteome</keyword>
<keyword id="KW-0732">Signal</keyword>
<keyword id="KW-0812">Transmembrane</keyword>
<keyword id="KW-1133">Transmembrane helix</keyword>
<gene>
    <name type="primary">Pianp</name>
    <name type="synonym">Panp</name>
</gene>
<feature type="signal peptide" evidence="2">
    <location>
        <begin position="1"/>
        <end position="27"/>
    </location>
</feature>
<feature type="chain" id="PRO_0000285967" description="PILR alpha-associated neural protein">
    <location>
        <begin position="28"/>
        <end position="272"/>
    </location>
</feature>
<feature type="topological domain" description="Extracellular" evidence="2">
    <location>
        <begin position="28"/>
        <end position="174"/>
    </location>
</feature>
<feature type="transmembrane region" description="Helical" evidence="2">
    <location>
        <begin position="175"/>
        <end position="195"/>
    </location>
</feature>
<feature type="topological domain" description="Cytoplasmic" evidence="2">
    <location>
        <begin position="196"/>
        <end position="272"/>
    </location>
</feature>
<feature type="region of interest" description="Disordered" evidence="3">
    <location>
        <begin position="25"/>
        <end position="93"/>
    </location>
</feature>
<feature type="region of interest" description="Disordered" evidence="3">
    <location>
        <begin position="205"/>
        <end position="272"/>
    </location>
</feature>
<feature type="compositionally biased region" description="Polar residues" evidence="3">
    <location>
        <begin position="209"/>
        <end position="225"/>
    </location>
</feature>
<feature type="glycosylation site" description="O-linked (GalNAc...) threonine" evidence="1">
    <location>
        <position position="136"/>
    </location>
</feature>
<reference key="1">
    <citation type="journal article" date="2004" name="Genome Res.">
        <title>The status, quality, and expansion of the NIH full-length cDNA project: the Mammalian Gene Collection (MGC).</title>
        <authorList>
            <consortium name="The MGC Project Team"/>
        </authorList>
    </citation>
    <scope>NUCLEOTIDE SEQUENCE [LARGE SCALE MRNA]</scope>
    <source>
        <tissue>Kidney</tissue>
    </source>
</reference>
<comment type="function">
    <text evidence="1">Acts as a ligand for PILRA in neuronal tissues, where it may be involved in immune regulation.</text>
</comment>
<comment type="subcellular location">
    <subcellularLocation>
        <location evidence="4">Membrane</location>
        <topology evidence="4">Single-pass type I membrane protein</topology>
    </subcellularLocation>
</comment>
<comment type="PTM">
    <text evidence="1">O-glycosylation at Thr-136 is essential for recognition by PILRA.</text>
</comment>
<proteinExistence type="evidence at transcript level"/>